<keyword id="KW-0028">Amino-acid biosynthesis</keyword>
<keyword id="KW-0057">Aromatic amino acid biosynthesis</keyword>
<keyword id="KW-0210">Decarboxylase</keyword>
<keyword id="KW-0456">Lyase</keyword>
<keyword id="KW-0822">Tryptophan biosynthesis</keyword>
<dbReference type="EC" id="4.1.1.48" evidence="1"/>
<dbReference type="EMBL" id="CP000738">
    <property type="protein sequence ID" value="ABR60255.1"/>
    <property type="molecule type" value="Genomic_DNA"/>
</dbReference>
<dbReference type="RefSeq" id="WP_011975565.1">
    <property type="nucleotide sequence ID" value="NC_009636.1"/>
</dbReference>
<dbReference type="RefSeq" id="YP_001327090.1">
    <property type="nucleotide sequence ID" value="NC_009636.1"/>
</dbReference>
<dbReference type="SMR" id="A6U9C5"/>
<dbReference type="STRING" id="366394.Smed_1409"/>
<dbReference type="KEGG" id="smd:Smed_1409"/>
<dbReference type="PATRIC" id="fig|366394.8.peg.4538"/>
<dbReference type="eggNOG" id="COG0134">
    <property type="taxonomic scope" value="Bacteria"/>
</dbReference>
<dbReference type="HOGENOM" id="CLU_034247_2_0_5"/>
<dbReference type="OrthoDB" id="9804217at2"/>
<dbReference type="UniPathway" id="UPA00035">
    <property type="reaction ID" value="UER00043"/>
</dbReference>
<dbReference type="Proteomes" id="UP000001108">
    <property type="component" value="Chromosome"/>
</dbReference>
<dbReference type="GO" id="GO:0004425">
    <property type="term" value="F:indole-3-glycerol-phosphate synthase activity"/>
    <property type="evidence" value="ECO:0007669"/>
    <property type="project" value="UniProtKB-UniRule"/>
</dbReference>
<dbReference type="GO" id="GO:0004640">
    <property type="term" value="F:phosphoribosylanthranilate isomerase activity"/>
    <property type="evidence" value="ECO:0007669"/>
    <property type="project" value="TreeGrafter"/>
</dbReference>
<dbReference type="GO" id="GO:0000162">
    <property type="term" value="P:L-tryptophan biosynthetic process"/>
    <property type="evidence" value="ECO:0007669"/>
    <property type="project" value="UniProtKB-UniRule"/>
</dbReference>
<dbReference type="CDD" id="cd00331">
    <property type="entry name" value="IGPS"/>
    <property type="match status" value="1"/>
</dbReference>
<dbReference type="FunFam" id="3.20.20.70:FF:000024">
    <property type="entry name" value="Indole-3-glycerol phosphate synthase"/>
    <property type="match status" value="1"/>
</dbReference>
<dbReference type="Gene3D" id="3.20.20.70">
    <property type="entry name" value="Aldolase class I"/>
    <property type="match status" value="1"/>
</dbReference>
<dbReference type="HAMAP" id="MF_00134_B">
    <property type="entry name" value="IGPS_B"/>
    <property type="match status" value="1"/>
</dbReference>
<dbReference type="InterPro" id="IPR013785">
    <property type="entry name" value="Aldolase_TIM"/>
</dbReference>
<dbReference type="InterPro" id="IPR045186">
    <property type="entry name" value="Indole-3-glycerol_P_synth"/>
</dbReference>
<dbReference type="InterPro" id="IPR013798">
    <property type="entry name" value="Indole-3-glycerol_P_synth_dom"/>
</dbReference>
<dbReference type="InterPro" id="IPR001468">
    <property type="entry name" value="Indole-3-GlycerolPSynthase_CS"/>
</dbReference>
<dbReference type="InterPro" id="IPR011060">
    <property type="entry name" value="RibuloseP-bd_barrel"/>
</dbReference>
<dbReference type="NCBIfam" id="NF001370">
    <property type="entry name" value="PRK00278.1-2"/>
    <property type="match status" value="1"/>
</dbReference>
<dbReference type="NCBIfam" id="NF001373">
    <property type="entry name" value="PRK00278.1-6"/>
    <property type="match status" value="1"/>
</dbReference>
<dbReference type="NCBIfam" id="NF001377">
    <property type="entry name" value="PRK00278.2-4"/>
    <property type="match status" value="1"/>
</dbReference>
<dbReference type="PANTHER" id="PTHR22854:SF2">
    <property type="entry name" value="INDOLE-3-GLYCEROL-PHOSPHATE SYNTHASE"/>
    <property type="match status" value="1"/>
</dbReference>
<dbReference type="PANTHER" id="PTHR22854">
    <property type="entry name" value="TRYPTOPHAN BIOSYNTHESIS PROTEIN"/>
    <property type="match status" value="1"/>
</dbReference>
<dbReference type="Pfam" id="PF00218">
    <property type="entry name" value="IGPS"/>
    <property type="match status" value="1"/>
</dbReference>
<dbReference type="SUPFAM" id="SSF51366">
    <property type="entry name" value="Ribulose-phoshate binding barrel"/>
    <property type="match status" value="1"/>
</dbReference>
<dbReference type="PROSITE" id="PS00614">
    <property type="entry name" value="IGPS"/>
    <property type="match status" value="1"/>
</dbReference>
<feature type="chain" id="PRO_1000018552" description="Indole-3-glycerol phosphate synthase">
    <location>
        <begin position="1"/>
        <end position="271"/>
    </location>
</feature>
<accession>A6U9C5</accession>
<protein>
    <recommendedName>
        <fullName evidence="1">Indole-3-glycerol phosphate synthase</fullName>
        <shortName evidence="1">IGPS</shortName>
        <ecNumber evidence="1">4.1.1.48</ecNumber>
    </recommendedName>
</protein>
<evidence type="ECO:0000255" key="1">
    <source>
        <dbReference type="HAMAP-Rule" id="MF_00134"/>
    </source>
</evidence>
<gene>
    <name evidence="1" type="primary">trpC</name>
    <name type="ordered locus">Smed_1409</name>
</gene>
<organism>
    <name type="scientific">Sinorhizobium medicae (strain WSM419)</name>
    <name type="common">Ensifer medicae</name>
    <dbReference type="NCBI Taxonomy" id="366394"/>
    <lineage>
        <taxon>Bacteria</taxon>
        <taxon>Pseudomonadati</taxon>
        <taxon>Pseudomonadota</taxon>
        <taxon>Alphaproteobacteria</taxon>
        <taxon>Hyphomicrobiales</taxon>
        <taxon>Rhizobiaceae</taxon>
        <taxon>Sinorhizobium/Ensifer group</taxon>
        <taxon>Sinorhizobium</taxon>
    </lineage>
</organism>
<reference key="1">
    <citation type="submission" date="2007-06" db="EMBL/GenBank/DDBJ databases">
        <title>Complete sequence of Sinorhizobium medicae WSM419 chromosome.</title>
        <authorList>
            <consortium name="US DOE Joint Genome Institute"/>
            <person name="Copeland A."/>
            <person name="Lucas S."/>
            <person name="Lapidus A."/>
            <person name="Barry K."/>
            <person name="Glavina del Rio T."/>
            <person name="Dalin E."/>
            <person name="Tice H."/>
            <person name="Pitluck S."/>
            <person name="Chain P."/>
            <person name="Malfatti S."/>
            <person name="Shin M."/>
            <person name="Vergez L."/>
            <person name="Schmutz J."/>
            <person name="Larimer F."/>
            <person name="Land M."/>
            <person name="Hauser L."/>
            <person name="Kyrpides N."/>
            <person name="Mikhailova N."/>
            <person name="Reeve W.G."/>
            <person name="Richardson P."/>
        </authorList>
    </citation>
    <scope>NUCLEOTIDE SEQUENCE [LARGE SCALE GENOMIC DNA]</scope>
    <source>
        <strain>WSM419</strain>
    </source>
</reference>
<comment type="catalytic activity">
    <reaction evidence="1">
        <text>1-(2-carboxyphenylamino)-1-deoxy-D-ribulose 5-phosphate + H(+) = (1S,2R)-1-C-(indol-3-yl)glycerol 3-phosphate + CO2 + H2O</text>
        <dbReference type="Rhea" id="RHEA:23476"/>
        <dbReference type="ChEBI" id="CHEBI:15377"/>
        <dbReference type="ChEBI" id="CHEBI:15378"/>
        <dbReference type="ChEBI" id="CHEBI:16526"/>
        <dbReference type="ChEBI" id="CHEBI:58613"/>
        <dbReference type="ChEBI" id="CHEBI:58866"/>
        <dbReference type="EC" id="4.1.1.48"/>
    </reaction>
</comment>
<comment type="pathway">
    <text evidence="1">Amino-acid biosynthesis; L-tryptophan biosynthesis; L-tryptophan from chorismate: step 4/5.</text>
</comment>
<comment type="similarity">
    <text evidence="1">Belongs to the TrpC family.</text>
</comment>
<proteinExistence type="inferred from homology"/>
<sequence>MTDILRRIEAYKRGEIAAAKVRIPLAELKARIAEQSPPRGFRAALGAHREKGDFGLIAEIKKASPSKGLIRPDFDPPELAKAYAAGGAACLSVLTDAPSFQGAPEFLTKAREACPLPALRKDFMFDTYQVFEARAWGADCILLIMASLADDDARRLEEAAFALGMDVLVEVHDAEEMDRALRLSSPLVGINNRNLRTFEVDLAVSERLATMVSSDHLLVGESGVFTHEDCRRLEKSGITTFLVGESLMRKDDVEAATRALLTGSANILAAE</sequence>
<name>TRPC_SINMW</name>